<name>CUTS_STRCO</name>
<feature type="chain" id="PRO_0000074744" description="Sensor protein CutS">
    <location>
        <begin position="1"/>
        <end position="414"/>
    </location>
</feature>
<feature type="transmembrane region" description="Helical" evidence="1">
    <location>
        <begin position="37"/>
        <end position="57"/>
    </location>
</feature>
<feature type="transmembrane region" description="Helical" evidence="1">
    <location>
        <begin position="121"/>
        <end position="141"/>
    </location>
</feature>
<feature type="domain" description="HAMP" evidence="2">
    <location>
        <begin position="142"/>
        <end position="194"/>
    </location>
</feature>
<feature type="domain" description="Histidine kinase" evidence="3">
    <location>
        <begin position="202"/>
        <end position="414"/>
    </location>
</feature>
<feature type="region of interest" description="Disordered" evidence="4">
    <location>
        <begin position="1"/>
        <end position="21"/>
    </location>
</feature>
<feature type="compositionally biased region" description="Pro residues" evidence="4">
    <location>
        <begin position="1"/>
        <end position="15"/>
    </location>
</feature>
<feature type="modified residue" description="Phosphohistidine; by autocatalysis" evidence="3">
    <location>
        <position position="205"/>
    </location>
</feature>
<accession>P0A4I7</accession>
<accession>Q03757</accession>
<reference key="1">
    <citation type="journal article" date="2002" name="Nature">
        <title>Complete genome sequence of the model actinomycete Streptomyces coelicolor A3(2).</title>
        <authorList>
            <person name="Bentley S.D."/>
            <person name="Chater K.F."/>
            <person name="Cerdeno-Tarraga A.-M."/>
            <person name="Challis G.L."/>
            <person name="Thomson N.R."/>
            <person name="James K.D."/>
            <person name="Harris D.E."/>
            <person name="Quail M.A."/>
            <person name="Kieser H."/>
            <person name="Harper D."/>
            <person name="Bateman A."/>
            <person name="Brown S."/>
            <person name="Chandra G."/>
            <person name="Chen C.W."/>
            <person name="Collins M."/>
            <person name="Cronin A."/>
            <person name="Fraser A."/>
            <person name="Goble A."/>
            <person name="Hidalgo J."/>
            <person name="Hornsby T."/>
            <person name="Howarth S."/>
            <person name="Huang C.-H."/>
            <person name="Kieser T."/>
            <person name="Larke L."/>
            <person name="Murphy L.D."/>
            <person name="Oliver K."/>
            <person name="O'Neil S."/>
            <person name="Rabbinowitsch E."/>
            <person name="Rajandream M.A."/>
            <person name="Rutherford K.M."/>
            <person name="Rutter S."/>
            <person name="Seeger K."/>
            <person name="Saunders D."/>
            <person name="Sharp S."/>
            <person name="Squares R."/>
            <person name="Squares S."/>
            <person name="Taylor K."/>
            <person name="Warren T."/>
            <person name="Wietzorrek A."/>
            <person name="Woodward J.R."/>
            <person name="Barrell B.G."/>
            <person name="Parkhill J."/>
            <person name="Hopwood D.A."/>
        </authorList>
    </citation>
    <scope>NUCLEOTIDE SEQUENCE [LARGE SCALE GENOMIC DNA]</scope>
    <source>
        <strain>ATCC BAA-471 / A3(2) / M145</strain>
    </source>
</reference>
<proteinExistence type="inferred from homology"/>
<comment type="function">
    <text>Member of the two-component regulatory system CutS/CutR, involved in the regulation of copper metabolism.</text>
</comment>
<comment type="catalytic activity">
    <reaction>
        <text>ATP + protein L-histidine = ADP + protein N-phospho-L-histidine.</text>
        <dbReference type="EC" id="2.7.13.3"/>
    </reaction>
</comment>
<comment type="subcellular location">
    <subcellularLocation>
        <location evidence="5">Cell membrane</location>
        <topology evidence="5">Multi-pass membrane protein</topology>
    </subcellularLocation>
</comment>
<gene>
    <name type="primary">cutS</name>
    <name type="ordered locus">SCO5863</name>
    <name type="ORF">SC2E9.04</name>
</gene>
<dbReference type="EC" id="2.7.13.3"/>
<dbReference type="EMBL" id="AL939125">
    <property type="protein sequence ID" value="CAA16472.1"/>
    <property type="molecule type" value="Genomic_DNA"/>
</dbReference>
<dbReference type="PIR" id="T34815">
    <property type="entry name" value="T34815"/>
</dbReference>
<dbReference type="RefSeq" id="NP_629985.1">
    <property type="nucleotide sequence ID" value="NC_003888.3"/>
</dbReference>
<dbReference type="RefSeq" id="WP_003973157.1">
    <property type="nucleotide sequence ID" value="NZ_VNID01000007.1"/>
</dbReference>
<dbReference type="SMR" id="P0A4I7"/>
<dbReference type="STRING" id="100226.gene:17763523"/>
<dbReference type="PaxDb" id="100226-SCO5863"/>
<dbReference type="KEGG" id="sco:SCO5863"/>
<dbReference type="PATRIC" id="fig|100226.15.peg.5962"/>
<dbReference type="eggNOG" id="COG2205">
    <property type="taxonomic scope" value="Bacteria"/>
</dbReference>
<dbReference type="HOGENOM" id="CLU_000445_89_3_11"/>
<dbReference type="InParanoid" id="P0A4I7"/>
<dbReference type="OrthoDB" id="9786919at2"/>
<dbReference type="PhylomeDB" id="P0A4I7"/>
<dbReference type="BRENDA" id="2.7.13.3">
    <property type="organism ID" value="5998"/>
</dbReference>
<dbReference type="Proteomes" id="UP000001973">
    <property type="component" value="Chromosome"/>
</dbReference>
<dbReference type="GO" id="GO:0005886">
    <property type="term" value="C:plasma membrane"/>
    <property type="evidence" value="ECO:0007669"/>
    <property type="project" value="UniProtKB-SubCell"/>
</dbReference>
<dbReference type="GO" id="GO:0005524">
    <property type="term" value="F:ATP binding"/>
    <property type="evidence" value="ECO:0007669"/>
    <property type="project" value="UniProtKB-KW"/>
</dbReference>
<dbReference type="GO" id="GO:0000155">
    <property type="term" value="F:phosphorelay sensor kinase activity"/>
    <property type="evidence" value="ECO:0007669"/>
    <property type="project" value="InterPro"/>
</dbReference>
<dbReference type="CDD" id="cd06225">
    <property type="entry name" value="HAMP"/>
    <property type="match status" value="1"/>
</dbReference>
<dbReference type="CDD" id="cd00075">
    <property type="entry name" value="HATPase"/>
    <property type="match status" value="1"/>
</dbReference>
<dbReference type="CDD" id="cd00082">
    <property type="entry name" value="HisKA"/>
    <property type="match status" value="1"/>
</dbReference>
<dbReference type="Gene3D" id="1.10.287.130">
    <property type="match status" value="1"/>
</dbReference>
<dbReference type="Gene3D" id="6.10.340.10">
    <property type="match status" value="1"/>
</dbReference>
<dbReference type="Gene3D" id="3.30.565.10">
    <property type="entry name" value="Histidine kinase-like ATPase, C-terminal domain"/>
    <property type="match status" value="1"/>
</dbReference>
<dbReference type="InterPro" id="IPR003660">
    <property type="entry name" value="HAMP_dom"/>
</dbReference>
<dbReference type="InterPro" id="IPR036890">
    <property type="entry name" value="HATPase_C_sf"/>
</dbReference>
<dbReference type="InterPro" id="IPR005467">
    <property type="entry name" value="His_kinase_dom"/>
</dbReference>
<dbReference type="InterPro" id="IPR003661">
    <property type="entry name" value="HisK_dim/P_dom"/>
</dbReference>
<dbReference type="InterPro" id="IPR036097">
    <property type="entry name" value="HisK_dim/P_sf"/>
</dbReference>
<dbReference type="InterPro" id="IPR004358">
    <property type="entry name" value="Sig_transdc_His_kin-like_C"/>
</dbReference>
<dbReference type="InterPro" id="IPR050428">
    <property type="entry name" value="TCS_sensor_his_kinase"/>
</dbReference>
<dbReference type="PANTHER" id="PTHR45436:SF5">
    <property type="entry name" value="SENSOR HISTIDINE KINASE TRCS"/>
    <property type="match status" value="1"/>
</dbReference>
<dbReference type="PANTHER" id="PTHR45436">
    <property type="entry name" value="SENSOR HISTIDINE KINASE YKOH"/>
    <property type="match status" value="1"/>
</dbReference>
<dbReference type="Pfam" id="PF00672">
    <property type="entry name" value="HAMP"/>
    <property type="match status" value="1"/>
</dbReference>
<dbReference type="Pfam" id="PF02518">
    <property type="entry name" value="HATPase_c"/>
    <property type="match status" value="1"/>
</dbReference>
<dbReference type="Pfam" id="PF00512">
    <property type="entry name" value="HisKA"/>
    <property type="match status" value="1"/>
</dbReference>
<dbReference type="PRINTS" id="PR00344">
    <property type="entry name" value="BCTRLSENSOR"/>
</dbReference>
<dbReference type="SMART" id="SM00304">
    <property type="entry name" value="HAMP"/>
    <property type="match status" value="1"/>
</dbReference>
<dbReference type="SMART" id="SM00387">
    <property type="entry name" value="HATPase_c"/>
    <property type="match status" value="1"/>
</dbReference>
<dbReference type="SMART" id="SM00388">
    <property type="entry name" value="HisKA"/>
    <property type="match status" value="1"/>
</dbReference>
<dbReference type="SUPFAM" id="SSF55874">
    <property type="entry name" value="ATPase domain of HSP90 chaperone/DNA topoisomerase II/histidine kinase"/>
    <property type="match status" value="1"/>
</dbReference>
<dbReference type="SUPFAM" id="SSF158472">
    <property type="entry name" value="HAMP domain-like"/>
    <property type="match status" value="1"/>
</dbReference>
<dbReference type="SUPFAM" id="SSF47384">
    <property type="entry name" value="Homodimeric domain of signal transducing histidine kinase"/>
    <property type="match status" value="1"/>
</dbReference>
<dbReference type="PROSITE" id="PS50885">
    <property type="entry name" value="HAMP"/>
    <property type="match status" value="1"/>
</dbReference>
<dbReference type="PROSITE" id="PS50109">
    <property type="entry name" value="HIS_KIN"/>
    <property type="match status" value="1"/>
</dbReference>
<protein>
    <recommendedName>
        <fullName>Sensor protein CutS</fullName>
        <ecNumber>2.7.13.3</ecNumber>
    </recommendedName>
</protein>
<sequence>MATTPAPPGAPPKPTWDPRSATPLPWLRPTIRIRLTLLYGGMFLIAGILLLSIIYLLAAQAVRTGNEPLYKIVDFTDLKVSSSTCPVVDNGGLSLSDFNAAISDCMDHQRKVALDNLLSRSLLALLGLAVIAFAFGYAMAGRVLSPLGRITRTARAVAGSDLSRRIELDGPDDELKELADTFDDMLERLQRAFTAQQRFVGNASHELRTPLAINRTLLEVHLSDPGAPVELQQLGKTLLATNERSELLVEGLLLLARSDNQIVERKPVDLAEVAGQAIDQVHAEAESKGVEVRGTREAAVVQGNGVLLERIALNLVQNAVRYNVAGQGWVEVATAVENGQAVLVVTNTGPVVPAYEVDNLFEPFRRLRTERTGSDKGVGLGLSIARSVARAHGGHISAQPREGGGLVMRVTLPV</sequence>
<organism>
    <name type="scientific">Streptomyces coelicolor (strain ATCC BAA-471 / A3(2) / M145)</name>
    <dbReference type="NCBI Taxonomy" id="100226"/>
    <lineage>
        <taxon>Bacteria</taxon>
        <taxon>Bacillati</taxon>
        <taxon>Actinomycetota</taxon>
        <taxon>Actinomycetes</taxon>
        <taxon>Kitasatosporales</taxon>
        <taxon>Streptomycetaceae</taxon>
        <taxon>Streptomyces</taxon>
        <taxon>Streptomyces albidoflavus group</taxon>
    </lineage>
</organism>
<evidence type="ECO:0000255" key="1"/>
<evidence type="ECO:0000255" key="2">
    <source>
        <dbReference type="PROSITE-ProRule" id="PRU00102"/>
    </source>
</evidence>
<evidence type="ECO:0000255" key="3">
    <source>
        <dbReference type="PROSITE-ProRule" id="PRU00107"/>
    </source>
</evidence>
<evidence type="ECO:0000256" key="4">
    <source>
        <dbReference type="SAM" id="MobiDB-lite"/>
    </source>
</evidence>
<evidence type="ECO:0000305" key="5"/>
<keyword id="KW-0067">ATP-binding</keyword>
<keyword id="KW-1003">Cell membrane</keyword>
<keyword id="KW-0418">Kinase</keyword>
<keyword id="KW-0472">Membrane</keyword>
<keyword id="KW-0547">Nucleotide-binding</keyword>
<keyword id="KW-0597">Phosphoprotein</keyword>
<keyword id="KW-1185">Reference proteome</keyword>
<keyword id="KW-0808">Transferase</keyword>
<keyword id="KW-0812">Transmembrane</keyword>
<keyword id="KW-1133">Transmembrane helix</keyword>
<keyword id="KW-0902">Two-component regulatory system</keyword>